<name>NDE1B_XENLA</name>
<dbReference type="EMBL" id="BC070755">
    <property type="protein sequence ID" value="AAH70755.1"/>
    <property type="status" value="ALT_INIT"/>
    <property type="molecule type" value="mRNA"/>
</dbReference>
<dbReference type="RefSeq" id="NP_001084910.2">
    <property type="nucleotide sequence ID" value="NM_001091441.1"/>
</dbReference>
<dbReference type="SMR" id="Q6NRJ5"/>
<dbReference type="DNASU" id="431961"/>
<dbReference type="GeneID" id="431961"/>
<dbReference type="KEGG" id="xla:431961"/>
<dbReference type="AGR" id="Xenbase:XB-GENE-1005621"/>
<dbReference type="CTD" id="431961"/>
<dbReference type="Xenbase" id="XB-GENE-1005621">
    <property type="gene designation" value="nde1.S"/>
</dbReference>
<dbReference type="OMA" id="EQTVNRR"/>
<dbReference type="OrthoDB" id="5877028at2759"/>
<dbReference type="Proteomes" id="UP000186698">
    <property type="component" value="Chromosome 9_10S"/>
</dbReference>
<dbReference type="Bgee" id="431961">
    <property type="expression patterns" value="Expressed in blastula and 19 other cell types or tissues"/>
</dbReference>
<dbReference type="GO" id="GO:0005813">
    <property type="term" value="C:centrosome"/>
    <property type="evidence" value="ECO:0000318"/>
    <property type="project" value="GO_Central"/>
</dbReference>
<dbReference type="GO" id="GO:0032154">
    <property type="term" value="C:cleavage furrow"/>
    <property type="evidence" value="ECO:0007669"/>
    <property type="project" value="UniProtKB-SubCell"/>
</dbReference>
<dbReference type="GO" id="GO:0005737">
    <property type="term" value="C:cytoplasm"/>
    <property type="evidence" value="ECO:0000304"/>
    <property type="project" value="AgBase"/>
</dbReference>
<dbReference type="GO" id="GO:0030659">
    <property type="term" value="C:cytoplasmic vesicle membrane"/>
    <property type="evidence" value="ECO:0007669"/>
    <property type="project" value="UniProtKB-SubCell"/>
</dbReference>
<dbReference type="GO" id="GO:0005871">
    <property type="term" value="C:kinesin complex"/>
    <property type="evidence" value="ECO:0000318"/>
    <property type="project" value="GO_Central"/>
</dbReference>
<dbReference type="GO" id="GO:0000776">
    <property type="term" value="C:kinetochore"/>
    <property type="evidence" value="ECO:0000318"/>
    <property type="project" value="GO_Central"/>
</dbReference>
<dbReference type="GO" id="GO:0005874">
    <property type="term" value="C:microtubule"/>
    <property type="evidence" value="ECO:0007669"/>
    <property type="project" value="UniProtKB-KW"/>
</dbReference>
<dbReference type="GO" id="GO:0031616">
    <property type="term" value="C:spindle pole centrosome"/>
    <property type="evidence" value="ECO:0000250"/>
    <property type="project" value="UniProtKB"/>
</dbReference>
<dbReference type="GO" id="GO:0008017">
    <property type="term" value="F:microtubule binding"/>
    <property type="evidence" value="ECO:0000250"/>
    <property type="project" value="UniProtKB"/>
</dbReference>
<dbReference type="GO" id="GO:0051301">
    <property type="term" value="P:cell division"/>
    <property type="evidence" value="ECO:0007669"/>
    <property type="project" value="UniProtKB-KW"/>
</dbReference>
<dbReference type="GO" id="GO:0016477">
    <property type="term" value="P:cell migration"/>
    <property type="evidence" value="ECO:0000318"/>
    <property type="project" value="GO_Central"/>
</dbReference>
<dbReference type="GO" id="GO:0051298">
    <property type="term" value="P:centrosome duplication"/>
    <property type="evidence" value="ECO:0000250"/>
    <property type="project" value="UniProtKB"/>
</dbReference>
<dbReference type="GO" id="GO:0051642">
    <property type="term" value="P:centrosome localization"/>
    <property type="evidence" value="ECO:0000318"/>
    <property type="project" value="GO_Central"/>
</dbReference>
<dbReference type="GO" id="GO:0007059">
    <property type="term" value="P:chromosome segregation"/>
    <property type="evidence" value="ECO:0000318"/>
    <property type="project" value="GO_Central"/>
</dbReference>
<dbReference type="GO" id="GO:0051303">
    <property type="term" value="P:establishment of chromosome localization"/>
    <property type="evidence" value="ECO:0000318"/>
    <property type="project" value="GO_Central"/>
</dbReference>
<dbReference type="GO" id="GO:0000132">
    <property type="term" value="P:establishment of mitotic spindle orientation"/>
    <property type="evidence" value="ECO:0000318"/>
    <property type="project" value="GO_Central"/>
</dbReference>
<dbReference type="GO" id="GO:0007020">
    <property type="term" value="P:microtubule nucleation"/>
    <property type="evidence" value="ECO:0000318"/>
    <property type="project" value="GO_Central"/>
</dbReference>
<dbReference type="GO" id="GO:0007100">
    <property type="term" value="P:mitotic centrosome separation"/>
    <property type="evidence" value="ECO:0000318"/>
    <property type="project" value="GO_Central"/>
</dbReference>
<dbReference type="GO" id="GO:0010842">
    <property type="term" value="P:retina layer formation"/>
    <property type="evidence" value="ECO:0000304"/>
    <property type="project" value="AgBase"/>
</dbReference>
<dbReference type="GO" id="GO:0047496">
    <property type="term" value="P:vesicle transport along microtubule"/>
    <property type="evidence" value="ECO:0000318"/>
    <property type="project" value="GO_Central"/>
</dbReference>
<dbReference type="Gene3D" id="6.10.250.1080">
    <property type="match status" value="1"/>
</dbReference>
<dbReference type="InterPro" id="IPR033494">
    <property type="entry name" value="NUDE"/>
</dbReference>
<dbReference type="InterPro" id="IPR006964">
    <property type="entry name" value="NUDE_dom"/>
</dbReference>
<dbReference type="PANTHER" id="PTHR10921">
    <property type="entry name" value="NUCLEAR DISTRIBUTION PROTEIN NUDE HOMOLOG 1"/>
    <property type="match status" value="1"/>
</dbReference>
<dbReference type="PANTHER" id="PTHR10921:SF2">
    <property type="entry name" value="NUCLEAR DISTRIBUTION PROTEIN NUDE HOMOLOG 1"/>
    <property type="match status" value="1"/>
</dbReference>
<dbReference type="Pfam" id="PF04880">
    <property type="entry name" value="NUDE_C"/>
    <property type="match status" value="1"/>
</dbReference>
<evidence type="ECO:0000250" key="1"/>
<evidence type="ECO:0000250" key="2">
    <source>
        <dbReference type="UniProtKB" id="Q9NXR1"/>
    </source>
</evidence>
<evidence type="ECO:0000255" key="3"/>
<evidence type="ECO:0000305" key="4"/>
<gene>
    <name type="primary">nde1-b</name>
</gene>
<accession>Q6NRJ5</accession>
<reference key="1">
    <citation type="submission" date="2004-05" db="EMBL/GenBank/DDBJ databases">
        <authorList>
            <consortium name="NIH - Xenopus Gene Collection (XGC) project"/>
        </authorList>
    </citation>
    <scope>NUCLEOTIDE SEQUENCE [LARGE SCALE MRNA]</scope>
    <source>
        <tissue>Oocyte</tissue>
    </source>
</reference>
<organism>
    <name type="scientific">Xenopus laevis</name>
    <name type="common">African clawed frog</name>
    <dbReference type="NCBI Taxonomy" id="8355"/>
    <lineage>
        <taxon>Eukaryota</taxon>
        <taxon>Metazoa</taxon>
        <taxon>Chordata</taxon>
        <taxon>Craniata</taxon>
        <taxon>Vertebrata</taxon>
        <taxon>Euteleostomi</taxon>
        <taxon>Amphibia</taxon>
        <taxon>Batrachia</taxon>
        <taxon>Anura</taxon>
        <taxon>Pipoidea</taxon>
        <taxon>Pipidae</taxon>
        <taxon>Xenopodinae</taxon>
        <taxon>Xenopus</taxon>
        <taxon>Xenopus</taxon>
    </lineage>
</organism>
<comment type="function">
    <text evidence="2">Required for centrosome duplication and formation and function of the mitotic spindle.</text>
</comment>
<comment type="subunit">
    <text evidence="1">Self-associates. Interacts with pafah1b1 (By similarity).</text>
</comment>
<comment type="subcellular location">
    <subcellularLocation>
        <location evidence="1">Cytoplasm</location>
        <location evidence="1">Cytoskeleton</location>
    </subcellularLocation>
    <subcellularLocation>
        <location evidence="1">Cytoplasm</location>
        <location evidence="1">Cytoskeleton</location>
        <location evidence="1">Microtubule organizing center</location>
        <location evidence="1">Centrosome</location>
    </subcellularLocation>
    <subcellularLocation>
        <location evidence="1">Cytoplasm</location>
        <location evidence="1">Cytoskeleton</location>
        <location evidence="1">Spindle</location>
    </subcellularLocation>
    <subcellularLocation>
        <location evidence="1">Chromosome</location>
        <location evidence="1">Centromere</location>
        <location evidence="1">Kinetochore</location>
    </subcellularLocation>
    <subcellularLocation>
        <location evidence="1">Cleavage furrow</location>
    </subcellularLocation>
    <subcellularLocation>
        <location evidence="2">Cytoplasmic vesicle membrane</location>
    </subcellularLocation>
    <text evidence="1">Localizes to the interphase centrosome and to the mitotic spindle.</text>
</comment>
<comment type="PTM">
    <text evidence="1">Phosphorylated in mitosis.</text>
</comment>
<comment type="similarity">
    <text evidence="4">Belongs to the nudE family.</text>
</comment>
<comment type="sequence caution" evidence="4">
    <conflict type="erroneous initiation">
        <sequence resource="EMBL-CDS" id="AAH70755"/>
    </conflict>
</comment>
<feature type="chain" id="PRO_0000240207" description="Nuclear distribution protein nudE homolog 1-B">
    <location>
        <begin position="1"/>
        <end position="349"/>
    </location>
</feature>
<feature type="coiled-coil region" evidence="3">
    <location>
        <begin position="22"/>
        <end position="189"/>
    </location>
</feature>
<protein>
    <recommendedName>
        <fullName>Nuclear distribution protein nudE homolog 1-B</fullName>
    </recommendedName>
</protein>
<sequence>MDDLENIIFNSVEEEIIYWKSVAMKYKQCSEEAQQELQEFQEASREYEAELEAQLQQTEGRNRDIFSENNRLRMELDSIKEKYEEQHSENYIQISTLEGDLSTTKAVRDQLQKYIRELEQANDDLERAKRATIMSLEDFEQRLNQAIERNAFLESELDEKENVLESVQRLKDEARDLRQELAVQQKQEKPKSNMVSPETERMDTSVQASIAIPLAPLTPLSQRGCASTLNSPLSFKTSWDDGYSGTPLTPCARISALNIVGDLLRKVGALESKLASCRNFVHEQSPNRPLTSVSARMNKTREGIENRLSIASGSSVEKGLIKRLEFGSLPSNTPMQGMRSPQGVVKIII</sequence>
<keyword id="KW-0131">Cell cycle</keyword>
<keyword id="KW-0132">Cell division</keyword>
<keyword id="KW-0137">Centromere</keyword>
<keyword id="KW-0158">Chromosome</keyword>
<keyword id="KW-0175">Coiled coil</keyword>
<keyword id="KW-0963">Cytoplasm</keyword>
<keyword id="KW-0968">Cytoplasmic vesicle</keyword>
<keyword id="KW-0206">Cytoskeleton</keyword>
<keyword id="KW-0995">Kinetochore</keyword>
<keyword id="KW-0472">Membrane</keyword>
<keyword id="KW-0493">Microtubule</keyword>
<keyword id="KW-0498">Mitosis</keyword>
<keyword id="KW-0597">Phosphoprotein</keyword>
<keyword id="KW-1185">Reference proteome</keyword>
<proteinExistence type="evidence at transcript level"/>